<keyword id="KW-0067">ATP-binding</keyword>
<keyword id="KW-0235">DNA replication</keyword>
<keyword id="KW-0547">Nucleotide-binding</keyword>
<protein>
    <recommendedName>
        <fullName evidence="1">ORC1-type DNA replication protein</fullName>
    </recommendedName>
</protein>
<dbReference type="EMBL" id="CP000855">
    <property type="protein sequence ID" value="ACJ17134.1"/>
    <property type="molecule type" value="Genomic_DNA"/>
</dbReference>
<dbReference type="RefSeq" id="WP_012572606.1">
    <property type="nucleotide sequence ID" value="NC_011529.1"/>
</dbReference>
<dbReference type="SMR" id="B6YUE9"/>
<dbReference type="STRING" id="523850.TON_1644"/>
<dbReference type="GeneID" id="7018684"/>
<dbReference type="KEGG" id="ton:TON_1644"/>
<dbReference type="PATRIC" id="fig|523850.10.peg.1657"/>
<dbReference type="eggNOG" id="arCOG00467">
    <property type="taxonomic scope" value="Archaea"/>
</dbReference>
<dbReference type="HOGENOM" id="CLU_025112_3_1_2"/>
<dbReference type="OrthoDB" id="195574at2157"/>
<dbReference type="Proteomes" id="UP000002727">
    <property type="component" value="Chromosome"/>
</dbReference>
<dbReference type="GO" id="GO:0005524">
    <property type="term" value="F:ATP binding"/>
    <property type="evidence" value="ECO:0007669"/>
    <property type="project" value="UniProtKB-UniRule"/>
</dbReference>
<dbReference type="GO" id="GO:0016887">
    <property type="term" value="F:ATP hydrolysis activity"/>
    <property type="evidence" value="ECO:0007669"/>
    <property type="project" value="InterPro"/>
</dbReference>
<dbReference type="GO" id="GO:0006260">
    <property type="term" value="P:DNA replication"/>
    <property type="evidence" value="ECO:0007669"/>
    <property type="project" value="UniProtKB-UniRule"/>
</dbReference>
<dbReference type="CDD" id="cd00009">
    <property type="entry name" value="AAA"/>
    <property type="match status" value="1"/>
</dbReference>
<dbReference type="CDD" id="cd08768">
    <property type="entry name" value="Cdc6_C"/>
    <property type="match status" value="1"/>
</dbReference>
<dbReference type="CDD" id="cd18139">
    <property type="entry name" value="HLD_clamp_RarA"/>
    <property type="match status" value="1"/>
</dbReference>
<dbReference type="FunFam" id="1.10.8.60:FF:000073">
    <property type="entry name" value="ORC1-type DNA replication protein"/>
    <property type="match status" value="1"/>
</dbReference>
<dbReference type="FunFam" id="3.40.50.300:FF:000930">
    <property type="entry name" value="ORC1-type DNA replication protein"/>
    <property type="match status" value="1"/>
</dbReference>
<dbReference type="Gene3D" id="1.10.8.60">
    <property type="match status" value="1"/>
</dbReference>
<dbReference type="Gene3D" id="3.40.50.300">
    <property type="entry name" value="P-loop containing nucleotide triphosphate hydrolases"/>
    <property type="match status" value="1"/>
</dbReference>
<dbReference type="Gene3D" id="1.10.10.10">
    <property type="entry name" value="Winged helix-like DNA-binding domain superfamily/Winged helix DNA-binding domain"/>
    <property type="match status" value="1"/>
</dbReference>
<dbReference type="HAMAP" id="MF_01407">
    <property type="entry name" value="ORC1_type_DNA_replic_protein"/>
    <property type="match status" value="1"/>
</dbReference>
<dbReference type="InterPro" id="IPR003593">
    <property type="entry name" value="AAA+_ATPase"/>
</dbReference>
<dbReference type="InterPro" id="IPR041664">
    <property type="entry name" value="AAA_16"/>
</dbReference>
<dbReference type="InterPro" id="IPR015163">
    <property type="entry name" value="Cdc6_C"/>
</dbReference>
<dbReference type="InterPro" id="IPR055237">
    <property type="entry name" value="Cdc6_lid"/>
</dbReference>
<dbReference type="InterPro" id="IPR050311">
    <property type="entry name" value="ORC1/CDC6"/>
</dbReference>
<dbReference type="InterPro" id="IPR014277">
    <property type="entry name" value="Orc1/Cdc6_arc"/>
</dbReference>
<dbReference type="InterPro" id="IPR027417">
    <property type="entry name" value="P-loop_NTPase"/>
</dbReference>
<dbReference type="InterPro" id="IPR036388">
    <property type="entry name" value="WH-like_DNA-bd_sf"/>
</dbReference>
<dbReference type="InterPro" id="IPR036390">
    <property type="entry name" value="WH_DNA-bd_sf"/>
</dbReference>
<dbReference type="NCBIfam" id="TIGR02928">
    <property type="entry name" value="orc1/cdc6 family replication initiation protein"/>
    <property type="match status" value="1"/>
</dbReference>
<dbReference type="NCBIfam" id="NF001625">
    <property type="entry name" value="PRK00411.1-3"/>
    <property type="match status" value="1"/>
</dbReference>
<dbReference type="PANTHER" id="PTHR10763">
    <property type="entry name" value="CELL DIVISION CONTROL PROTEIN 6-RELATED"/>
    <property type="match status" value="1"/>
</dbReference>
<dbReference type="PANTHER" id="PTHR10763:SF22">
    <property type="entry name" value="ORC1-TYPE DNA REPLICATION PROTEIN"/>
    <property type="match status" value="1"/>
</dbReference>
<dbReference type="Pfam" id="PF13191">
    <property type="entry name" value="AAA_16"/>
    <property type="match status" value="1"/>
</dbReference>
<dbReference type="Pfam" id="PF09079">
    <property type="entry name" value="Cdc6_C"/>
    <property type="match status" value="1"/>
</dbReference>
<dbReference type="Pfam" id="PF22703">
    <property type="entry name" value="Cdc6_lid"/>
    <property type="match status" value="1"/>
</dbReference>
<dbReference type="SMART" id="SM00382">
    <property type="entry name" value="AAA"/>
    <property type="match status" value="1"/>
</dbReference>
<dbReference type="SMART" id="SM01074">
    <property type="entry name" value="Cdc6_C"/>
    <property type="match status" value="1"/>
</dbReference>
<dbReference type="SUPFAM" id="SSF52540">
    <property type="entry name" value="P-loop containing nucleoside triphosphate hydrolases"/>
    <property type="match status" value="1"/>
</dbReference>
<dbReference type="SUPFAM" id="SSF46785">
    <property type="entry name" value="Winged helix' DNA-binding domain"/>
    <property type="match status" value="1"/>
</dbReference>
<evidence type="ECO:0000255" key="1">
    <source>
        <dbReference type="HAMAP-Rule" id="MF_01407"/>
    </source>
</evidence>
<gene>
    <name type="primary">cdc6</name>
    <name type="ordered locus">TON_1644</name>
</gene>
<sequence>MDDNYLDSIFEKYLHAKKIFKNKEVLRHSYTPRELPHRREQIENLAHILVPVLRGETPSNVFVYGKTGTGKTVTIKFVTEELKKISQKYNVPVDVIYVNCEIVDTQYRVLANIVNHFREESGVEVPLVGWPTDEVYSKLKAVIDAKERFVIIVLDEIDKLIKKSGDDILYSLTRINTELHRAKVSIIGISNDLKFKDYLDPRVLSSLSEEEVVFPPYDANQLRDILMQRAKDAFNEGVLDDGVVPLCAALAAREHGDARRALDLLRVAGEIAEREGASKVTERHVWKAQEKIEQDTMEEVIKTLPLHSKVLLYAIVLLDENGELPANTGDVYSVYKSLCDHIDLEPLTQRRVSDLINELDMLGIINAKVVSKGRYGRTKEIRLNVTPYKVKNIYRHDHQLQTVLTISMSRQRRLL</sequence>
<proteinExistence type="inferred from homology"/>
<accession>B6YUE9</accession>
<name>CDC6_THEON</name>
<feature type="chain" id="PRO_1000145508" description="ORC1-type DNA replication protein">
    <location>
        <begin position="1"/>
        <end position="415"/>
    </location>
</feature>
<feature type="binding site" evidence="1">
    <location>
        <begin position="69"/>
        <end position="73"/>
    </location>
    <ligand>
        <name>ATP</name>
        <dbReference type="ChEBI" id="CHEBI:30616"/>
    </ligand>
</feature>
<feature type="binding site" evidence="1">
    <location>
        <position position="217"/>
    </location>
    <ligand>
        <name>ATP</name>
        <dbReference type="ChEBI" id="CHEBI:30616"/>
    </ligand>
</feature>
<feature type="binding site" evidence="1">
    <location>
        <position position="229"/>
    </location>
    <ligand>
        <name>ATP</name>
        <dbReference type="ChEBI" id="CHEBI:30616"/>
    </ligand>
</feature>
<comment type="function">
    <text evidence="1">Involved in regulation of DNA replication.</text>
</comment>
<comment type="similarity">
    <text evidence="1">Belongs to the CDC6/cdc18 family.</text>
</comment>
<reference key="1">
    <citation type="journal article" date="2008" name="J. Bacteriol.">
        <title>The complete genome sequence of Thermococcus onnurineus NA1 reveals a mixed heterotrophic and carboxydotrophic metabolism.</title>
        <authorList>
            <person name="Lee H.S."/>
            <person name="Kang S.G."/>
            <person name="Bae S.S."/>
            <person name="Lim J.K."/>
            <person name="Cho Y."/>
            <person name="Kim Y.J."/>
            <person name="Jeon J.H."/>
            <person name="Cha S.-S."/>
            <person name="Kwon K.K."/>
            <person name="Kim H.-T."/>
            <person name="Park C.-J."/>
            <person name="Lee H.-W."/>
            <person name="Kim S.I."/>
            <person name="Chun J."/>
            <person name="Colwell R.R."/>
            <person name="Kim S.-J."/>
            <person name="Lee J.-H."/>
        </authorList>
    </citation>
    <scope>NUCLEOTIDE SEQUENCE [LARGE SCALE GENOMIC DNA]</scope>
    <source>
        <strain>NA1</strain>
    </source>
</reference>
<organism>
    <name type="scientific">Thermococcus onnurineus (strain NA1)</name>
    <dbReference type="NCBI Taxonomy" id="523850"/>
    <lineage>
        <taxon>Archaea</taxon>
        <taxon>Methanobacteriati</taxon>
        <taxon>Methanobacteriota</taxon>
        <taxon>Thermococci</taxon>
        <taxon>Thermococcales</taxon>
        <taxon>Thermococcaceae</taxon>
        <taxon>Thermococcus</taxon>
    </lineage>
</organism>